<comment type="function">
    <text evidence="1">This is one of the proteins that bind and probably mediate the attachment of the 5S RNA into the large ribosomal subunit, where it forms part of the central protuberance. In the 70S ribosome it contacts protein S13 of the 30S subunit (bridge B1b), connecting the 2 subunits; this bridge is implicated in subunit movement. Contacts the P site tRNA; the 5S rRNA and some of its associated proteins might help stabilize positioning of ribosome-bound tRNAs.</text>
</comment>
<comment type="subunit">
    <text evidence="1">Part of the 50S ribosomal subunit; part of the 5S rRNA/L5/L18/L25 subcomplex. Contacts the 5S rRNA and the P site tRNA. Forms a bridge to the 30S subunit in the 70S ribosome.</text>
</comment>
<comment type="similarity">
    <text evidence="1">Belongs to the universal ribosomal protein uL5 family.</text>
</comment>
<protein>
    <recommendedName>
        <fullName evidence="1">Large ribosomal subunit protein uL5</fullName>
    </recommendedName>
    <alternativeName>
        <fullName evidence="2">50S ribosomal protein L5</fullName>
    </alternativeName>
</protein>
<reference key="1">
    <citation type="journal article" date="2010" name="Genome Biol. Evol.">
        <title>Continuing evolution of Burkholderia mallei through genome reduction and large-scale rearrangements.</title>
        <authorList>
            <person name="Losada L."/>
            <person name="Ronning C.M."/>
            <person name="DeShazer D."/>
            <person name="Woods D."/>
            <person name="Fedorova N."/>
            <person name="Kim H.S."/>
            <person name="Shabalina S.A."/>
            <person name="Pearson T.R."/>
            <person name="Brinkac L."/>
            <person name="Tan P."/>
            <person name="Nandi T."/>
            <person name="Crabtree J."/>
            <person name="Badger J."/>
            <person name="Beckstrom-Sternberg S."/>
            <person name="Saqib M."/>
            <person name="Schutzer S.E."/>
            <person name="Keim P."/>
            <person name="Nierman W.C."/>
        </authorList>
    </citation>
    <scope>NUCLEOTIDE SEQUENCE [LARGE SCALE GENOMIC DNA]</scope>
    <source>
        <strain>NCTC 10229</strain>
    </source>
</reference>
<dbReference type="EMBL" id="CP000546">
    <property type="protein sequence ID" value="ABN01467.1"/>
    <property type="molecule type" value="Genomic_DNA"/>
</dbReference>
<dbReference type="RefSeq" id="WP_004202757.1">
    <property type="nucleotide sequence ID" value="NC_008836.1"/>
</dbReference>
<dbReference type="SMR" id="A2S7I8"/>
<dbReference type="GeneID" id="93061820"/>
<dbReference type="KEGG" id="bml:BMA10229_A1936"/>
<dbReference type="HOGENOM" id="CLU_061015_2_1_4"/>
<dbReference type="Proteomes" id="UP000002283">
    <property type="component" value="Chromosome I"/>
</dbReference>
<dbReference type="GO" id="GO:1990904">
    <property type="term" value="C:ribonucleoprotein complex"/>
    <property type="evidence" value="ECO:0007669"/>
    <property type="project" value="UniProtKB-KW"/>
</dbReference>
<dbReference type="GO" id="GO:0005840">
    <property type="term" value="C:ribosome"/>
    <property type="evidence" value="ECO:0007669"/>
    <property type="project" value="UniProtKB-KW"/>
</dbReference>
<dbReference type="GO" id="GO:0019843">
    <property type="term" value="F:rRNA binding"/>
    <property type="evidence" value="ECO:0007669"/>
    <property type="project" value="UniProtKB-UniRule"/>
</dbReference>
<dbReference type="GO" id="GO:0003735">
    <property type="term" value="F:structural constituent of ribosome"/>
    <property type="evidence" value="ECO:0007669"/>
    <property type="project" value="InterPro"/>
</dbReference>
<dbReference type="GO" id="GO:0000049">
    <property type="term" value="F:tRNA binding"/>
    <property type="evidence" value="ECO:0007669"/>
    <property type="project" value="UniProtKB-UniRule"/>
</dbReference>
<dbReference type="GO" id="GO:0006412">
    <property type="term" value="P:translation"/>
    <property type="evidence" value="ECO:0007669"/>
    <property type="project" value="UniProtKB-UniRule"/>
</dbReference>
<dbReference type="FunFam" id="3.30.1440.10:FF:000001">
    <property type="entry name" value="50S ribosomal protein L5"/>
    <property type="match status" value="1"/>
</dbReference>
<dbReference type="Gene3D" id="3.30.1440.10">
    <property type="match status" value="1"/>
</dbReference>
<dbReference type="HAMAP" id="MF_01333_B">
    <property type="entry name" value="Ribosomal_uL5_B"/>
    <property type="match status" value="1"/>
</dbReference>
<dbReference type="InterPro" id="IPR002132">
    <property type="entry name" value="Ribosomal_uL5"/>
</dbReference>
<dbReference type="InterPro" id="IPR020930">
    <property type="entry name" value="Ribosomal_uL5_bac-type"/>
</dbReference>
<dbReference type="InterPro" id="IPR031309">
    <property type="entry name" value="Ribosomal_uL5_C"/>
</dbReference>
<dbReference type="InterPro" id="IPR020929">
    <property type="entry name" value="Ribosomal_uL5_CS"/>
</dbReference>
<dbReference type="InterPro" id="IPR022803">
    <property type="entry name" value="Ribosomal_uL5_dom_sf"/>
</dbReference>
<dbReference type="InterPro" id="IPR031310">
    <property type="entry name" value="Ribosomal_uL5_N"/>
</dbReference>
<dbReference type="NCBIfam" id="NF000585">
    <property type="entry name" value="PRK00010.1"/>
    <property type="match status" value="1"/>
</dbReference>
<dbReference type="PANTHER" id="PTHR11994">
    <property type="entry name" value="60S RIBOSOMAL PROTEIN L11-RELATED"/>
    <property type="match status" value="1"/>
</dbReference>
<dbReference type="Pfam" id="PF00281">
    <property type="entry name" value="Ribosomal_L5"/>
    <property type="match status" value="1"/>
</dbReference>
<dbReference type="Pfam" id="PF00673">
    <property type="entry name" value="Ribosomal_L5_C"/>
    <property type="match status" value="1"/>
</dbReference>
<dbReference type="PIRSF" id="PIRSF002161">
    <property type="entry name" value="Ribosomal_L5"/>
    <property type="match status" value="1"/>
</dbReference>
<dbReference type="SUPFAM" id="SSF55282">
    <property type="entry name" value="RL5-like"/>
    <property type="match status" value="1"/>
</dbReference>
<dbReference type="PROSITE" id="PS00358">
    <property type="entry name" value="RIBOSOMAL_L5"/>
    <property type="match status" value="1"/>
</dbReference>
<evidence type="ECO:0000255" key="1">
    <source>
        <dbReference type="HAMAP-Rule" id="MF_01333"/>
    </source>
</evidence>
<evidence type="ECO:0000305" key="2"/>
<keyword id="KW-0687">Ribonucleoprotein</keyword>
<keyword id="KW-0689">Ribosomal protein</keyword>
<keyword id="KW-0694">RNA-binding</keyword>
<keyword id="KW-0699">rRNA-binding</keyword>
<keyword id="KW-0820">tRNA-binding</keyword>
<name>RL5_BURM9</name>
<gene>
    <name evidence="1" type="primary">rplE</name>
    <name type="ordered locus">BMA10229_A1936</name>
</gene>
<accession>A2S7I8</accession>
<feature type="chain" id="PRO_1000052705" description="Large ribosomal subunit protein uL5">
    <location>
        <begin position="1"/>
        <end position="179"/>
    </location>
</feature>
<organism>
    <name type="scientific">Burkholderia mallei (strain NCTC 10229)</name>
    <dbReference type="NCBI Taxonomy" id="412022"/>
    <lineage>
        <taxon>Bacteria</taxon>
        <taxon>Pseudomonadati</taxon>
        <taxon>Pseudomonadota</taxon>
        <taxon>Betaproteobacteria</taxon>
        <taxon>Burkholderiales</taxon>
        <taxon>Burkholderiaceae</taxon>
        <taxon>Burkholderia</taxon>
        <taxon>pseudomallei group</taxon>
    </lineage>
</organism>
<sequence>MARFQEFYKEKVVPGLIEKFGYKSVMEVPRITKITLNMGLGEAVADKKIIENAVGDLTKIAGQKPVVTKARKAIAGFKIRQGYPIGAMVTLRGRAMYEFLDRFVTVALPRVRDFRGVSGRAFDGRGNYNIGVKEQIIFPEIDYDKIDALRGLNISITTTAKTDDEAKALLASFKFPFRN</sequence>
<proteinExistence type="inferred from homology"/>